<comment type="function">
    <text evidence="1">Covalent carrier of the coenzyme of citrate lyase.</text>
</comment>
<comment type="subunit">
    <text evidence="1">Oligomer with a subunit composition of (alpha,beta,gamma)6.</text>
</comment>
<comment type="subcellular location">
    <subcellularLocation>
        <location evidence="1">Cytoplasm</location>
    </subcellularLocation>
</comment>
<comment type="similarity">
    <text evidence="1">Belongs to the CitD family.</text>
</comment>
<organism>
    <name type="scientific">Lactobacillus acidophilus (strain ATCC 700396 / NCK56 / N2 / NCFM)</name>
    <dbReference type="NCBI Taxonomy" id="272621"/>
    <lineage>
        <taxon>Bacteria</taxon>
        <taxon>Bacillati</taxon>
        <taxon>Bacillota</taxon>
        <taxon>Bacilli</taxon>
        <taxon>Lactobacillales</taxon>
        <taxon>Lactobacillaceae</taxon>
        <taxon>Lactobacillus</taxon>
    </lineage>
</organism>
<accession>Q5FKK2</accession>
<name>CITD_LACAC</name>
<dbReference type="EMBL" id="CP000033">
    <property type="protein sequence ID" value="AAV42772.1"/>
    <property type="molecule type" value="Genomic_DNA"/>
</dbReference>
<dbReference type="RefSeq" id="WP_003547011.1">
    <property type="nucleotide sequence ID" value="NC_006814.3"/>
</dbReference>
<dbReference type="RefSeq" id="YP_193803.1">
    <property type="nucleotide sequence ID" value="NC_006814.3"/>
</dbReference>
<dbReference type="SMR" id="Q5FKK2"/>
<dbReference type="STRING" id="272621.LBA0915"/>
<dbReference type="GeneID" id="93289965"/>
<dbReference type="KEGG" id="lac:LBA0915"/>
<dbReference type="PATRIC" id="fig|272621.13.peg.873"/>
<dbReference type="eggNOG" id="COG3052">
    <property type="taxonomic scope" value="Bacteria"/>
</dbReference>
<dbReference type="HOGENOM" id="CLU_158489_0_0_9"/>
<dbReference type="OrthoDB" id="1120942at2"/>
<dbReference type="BioCyc" id="LACI272621:G1G49-922-MONOMER"/>
<dbReference type="Proteomes" id="UP000006381">
    <property type="component" value="Chromosome"/>
</dbReference>
<dbReference type="GO" id="GO:0005737">
    <property type="term" value="C:cytoplasm"/>
    <property type="evidence" value="ECO:0007669"/>
    <property type="project" value="UniProtKB-SubCell"/>
</dbReference>
<dbReference type="HAMAP" id="MF_00805">
    <property type="entry name" value="CitD"/>
    <property type="match status" value="1"/>
</dbReference>
<dbReference type="InterPro" id="IPR006495">
    <property type="entry name" value="CitD"/>
</dbReference>
<dbReference type="InterPro" id="IPR023439">
    <property type="entry name" value="Mal_deCO2ase/Cit_lyase_ACP"/>
</dbReference>
<dbReference type="NCBIfam" id="TIGR01608">
    <property type="entry name" value="citD"/>
    <property type="match status" value="1"/>
</dbReference>
<dbReference type="NCBIfam" id="NF009726">
    <property type="entry name" value="PRK13253.1"/>
    <property type="match status" value="1"/>
</dbReference>
<dbReference type="Pfam" id="PF06857">
    <property type="entry name" value="ACP"/>
    <property type="match status" value="1"/>
</dbReference>
<dbReference type="PIRSF" id="PIRSF002736">
    <property type="entry name" value="Citrt_lyas_gamma"/>
    <property type="match status" value="1"/>
</dbReference>
<sequence length="97" mass="10497">MEIKTTAVAGTLESSDIQIMISKGSDGIKIDLESEVKKAYGDQIEKVITETLKKYGLDNVNIKATDKGALDCVIKARTLAAAQRATETQDKPDLEVL</sequence>
<proteinExistence type="inferred from homology"/>
<evidence type="ECO:0000255" key="1">
    <source>
        <dbReference type="HAMAP-Rule" id="MF_00805"/>
    </source>
</evidence>
<feature type="chain" id="PRO_1000047073" description="Citrate lyase acyl carrier protein">
    <location>
        <begin position="1"/>
        <end position="97"/>
    </location>
</feature>
<feature type="modified residue" description="O-(phosphoribosyl dephospho-coenzyme A)serine" evidence="1">
    <location>
        <position position="14"/>
    </location>
</feature>
<reference key="1">
    <citation type="journal article" date="2005" name="Proc. Natl. Acad. Sci. U.S.A.">
        <title>Complete genome sequence of the probiotic lactic acid bacterium Lactobacillus acidophilus NCFM.</title>
        <authorList>
            <person name="Altermann E."/>
            <person name="Russell W.M."/>
            <person name="Azcarate-Peril M.A."/>
            <person name="Barrangou R."/>
            <person name="Buck B.L."/>
            <person name="McAuliffe O."/>
            <person name="Souther N."/>
            <person name="Dobson A."/>
            <person name="Duong T."/>
            <person name="Callanan M."/>
            <person name="Lick S."/>
            <person name="Hamrick A."/>
            <person name="Cano R."/>
            <person name="Klaenhammer T.R."/>
        </authorList>
    </citation>
    <scope>NUCLEOTIDE SEQUENCE [LARGE SCALE GENOMIC DNA]</scope>
    <source>
        <strain>ATCC 700396 / NCK56 / N2 / NCFM</strain>
    </source>
</reference>
<keyword id="KW-0963">Cytoplasm</keyword>
<keyword id="KW-0597">Phosphoprotein</keyword>
<keyword id="KW-1185">Reference proteome</keyword>
<protein>
    <recommendedName>
        <fullName evidence="1">Citrate lyase acyl carrier protein</fullName>
    </recommendedName>
    <alternativeName>
        <fullName evidence="1">Citrate lyase gamma chain</fullName>
    </alternativeName>
</protein>
<gene>
    <name evidence="1" type="primary">citD</name>
    <name type="ordered locus">LBA0915</name>
</gene>